<sequence>MAATPAAIEVSLTIVFVLFFSADVSLTRNSEMKAHTSKMDSYSSSIYMNVLPTSLAQTSYHLAPISHLKCLSVQCSSHIHYSYYYGASVLERCVFHRSRIRGARFIVPIPFYCISKAQECFLTVYILPKNPFRVPSEMQLQLLAKKKLKPNLL</sequence>
<proteinExistence type="uncertain"/>
<name>YG64_YEAST</name>
<organism>
    <name type="scientific">Saccharomyces cerevisiae (strain ATCC 204508 / S288c)</name>
    <name type="common">Baker's yeast</name>
    <dbReference type="NCBI Taxonomy" id="559292"/>
    <lineage>
        <taxon>Eukaryota</taxon>
        <taxon>Fungi</taxon>
        <taxon>Dikarya</taxon>
        <taxon>Ascomycota</taxon>
        <taxon>Saccharomycotina</taxon>
        <taxon>Saccharomycetes</taxon>
        <taxon>Saccharomycetales</taxon>
        <taxon>Saccharomycetaceae</taxon>
        <taxon>Saccharomyces</taxon>
    </lineage>
</organism>
<keyword id="KW-0472">Membrane</keyword>
<keyword id="KW-0812">Transmembrane</keyword>
<keyword id="KW-1133">Transmembrane helix</keyword>
<reference key="1">
    <citation type="journal article" date="1997" name="Yeast">
        <title>Sequence analysis of a near-subtelomeric 35.4 kb DNA segment on the right arm of chromosome VII from Saccharomyces cerevisiae carrying the MAL1 locus reveals 15 complete open reading frames, including ZUO1, BGL2 and BIO2 genes and an ABC transporter gene.</title>
        <authorList>
            <person name="Volckaert G."/>
            <person name="Voet M."/>
            <person name="Robben J."/>
        </authorList>
    </citation>
    <scope>NUCLEOTIDE SEQUENCE [GENOMIC DNA]</scope>
    <source>
        <strain>ATCC 96604 / S288c / FY1679</strain>
    </source>
</reference>
<reference key="2">
    <citation type="journal article" date="1997" name="Nature">
        <title>The nucleotide sequence of Saccharomyces cerevisiae chromosome VII.</title>
        <authorList>
            <person name="Tettelin H."/>
            <person name="Agostoni-Carbone M.L."/>
            <person name="Albermann K."/>
            <person name="Albers M."/>
            <person name="Arroyo J."/>
            <person name="Backes U."/>
            <person name="Barreiros T."/>
            <person name="Bertani I."/>
            <person name="Bjourson A.J."/>
            <person name="Brueckner M."/>
            <person name="Bruschi C.V."/>
            <person name="Carignani G."/>
            <person name="Castagnoli L."/>
            <person name="Cerdan E."/>
            <person name="Clemente M.L."/>
            <person name="Coblenz A."/>
            <person name="Coglievina M."/>
            <person name="Coissac E."/>
            <person name="Defoor E."/>
            <person name="Del Bino S."/>
            <person name="Delius H."/>
            <person name="Delneri D."/>
            <person name="de Wergifosse P."/>
            <person name="Dujon B."/>
            <person name="Durand P."/>
            <person name="Entian K.-D."/>
            <person name="Eraso P."/>
            <person name="Escribano V."/>
            <person name="Fabiani L."/>
            <person name="Fartmann B."/>
            <person name="Feroli F."/>
            <person name="Feuermann M."/>
            <person name="Frontali L."/>
            <person name="Garcia-Gonzalez M."/>
            <person name="Garcia-Saez M.I."/>
            <person name="Goffeau A."/>
            <person name="Guerreiro P."/>
            <person name="Hani J."/>
            <person name="Hansen M."/>
            <person name="Hebling U."/>
            <person name="Hernandez K."/>
            <person name="Heumann K."/>
            <person name="Hilger F."/>
            <person name="Hofmann B."/>
            <person name="Indge K.J."/>
            <person name="James C.M."/>
            <person name="Klima R."/>
            <person name="Koetter P."/>
            <person name="Kramer B."/>
            <person name="Kramer W."/>
            <person name="Lauquin G."/>
            <person name="Leuther H."/>
            <person name="Louis E.J."/>
            <person name="Maillier E."/>
            <person name="Marconi A."/>
            <person name="Martegani E."/>
            <person name="Mazon M.J."/>
            <person name="Mazzoni C."/>
            <person name="McReynolds A.D.K."/>
            <person name="Melchioretto P."/>
            <person name="Mewes H.-W."/>
            <person name="Minenkova O."/>
            <person name="Mueller-Auer S."/>
            <person name="Nawrocki A."/>
            <person name="Netter P."/>
            <person name="Neu R."/>
            <person name="Nombela C."/>
            <person name="Oliver S.G."/>
            <person name="Panzeri L."/>
            <person name="Paoluzi S."/>
            <person name="Plevani P."/>
            <person name="Portetelle D."/>
            <person name="Portillo F."/>
            <person name="Potier S."/>
            <person name="Purnelle B."/>
            <person name="Rieger M."/>
            <person name="Riles L."/>
            <person name="Rinaldi T."/>
            <person name="Robben J."/>
            <person name="Rodrigues-Pousada C."/>
            <person name="Rodriguez-Belmonte E."/>
            <person name="Rodriguez-Torres A.M."/>
            <person name="Rose M."/>
            <person name="Ruzzi M."/>
            <person name="Saliola M."/>
            <person name="Sanchez-Perez M."/>
            <person name="Schaefer B."/>
            <person name="Schaefer M."/>
            <person name="Scharfe M."/>
            <person name="Schmidheini T."/>
            <person name="Schreer A."/>
            <person name="Skala J."/>
            <person name="Souciet J.-L."/>
            <person name="Steensma H.Y."/>
            <person name="Talla E."/>
            <person name="Thierry A."/>
            <person name="Vandenbol M."/>
            <person name="van der Aart Q.J.M."/>
            <person name="Van Dyck L."/>
            <person name="Vanoni M."/>
            <person name="Verhasselt P."/>
            <person name="Voet M."/>
            <person name="Volckaert G."/>
            <person name="Wambutt R."/>
            <person name="Watson M.D."/>
            <person name="Weber N."/>
            <person name="Wedler E."/>
            <person name="Wedler H."/>
            <person name="Wipfli P."/>
            <person name="Wolf K."/>
            <person name="Wright L.F."/>
            <person name="Zaccaria P."/>
            <person name="Zimmermann M."/>
            <person name="Zollner A."/>
            <person name="Kleine K."/>
        </authorList>
    </citation>
    <scope>NUCLEOTIDE SEQUENCE [LARGE SCALE GENOMIC DNA]</scope>
    <source>
        <strain>ATCC 204508 / S288c</strain>
    </source>
</reference>
<reference key="3">
    <citation type="journal article" date="2014" name="G3 (Bethesda)">
        <title>The reference genome sequence of Saccharomyces cerevisiae: Then and now.</title>
        <authorList>
            <person name="Engel S.R."/>
            <person name="Dietrich F.S."/>
            <person name="Fisk D.G."/>
            <person name="Binkley G."/>
            <person name="Balakrishnan R."/>
            <person name="Costanzo M.C."/>
            <person name="Dwight S.S."/>
            <person name="Hitz B.C."/>
            <person name="Karra K."/>
            <person name="Nash R.S."/>
            <person name="Weng S."/>
            <person name="Wong E.D."/>
            <person name="Lloyd P."/>
            <person name="Skrzypek M.S."/>
            <person name="Miyasato S.R."/>
            <person name="Simison M."/>
            <person name="Cherry J.M."/>
        </authorList>
    </citation>
    <scope>GENOME REANNOTATION</scope>
    <source>
        <strain>ATCC 204508 / S288c</strain>
    </source>
</reference>
<reference key="4">
    <citation type="journal article" date="2007" name="Genome Res.">
        <title>Approaching a complete repository of sequence-verified protein-encoding clones for Saccharomyces cerevisiae.</title>
        <authorList>
            <person name="Hu Y."/>
            <person name="Rolfs A."/>
            <person name="Bhullar B."/>
            <person name="Murthy T.V.S."/>
            <person name="Zhu C."/>
            <person name="Berger M.F."/>
            <person name="Camargo A.A."/>
            <person name="Kelley F."/>
            <person name="McCarron S."/>
            <person name="Jepson D."/>
            <person name="Richardson A."/>
            <person name="Raphael J."/>
            <person name="Moreira D."/>
            <person name="Taycher E."/>
            <person name="Zuo D."/>
            <person name="Mohr S."/>
            <person name="Kane M.F."/>
            <person name="Williamson J."/>
            <person name="Simpson A.J.G."/>
            <person name="Bulyk M.L."/>
            <person name="Harlow E."/>
            <person name="Marsischky G."/>
            <person name="Kolodner R.D."/>
            <person name="LaBaer J."/>
        </authorList>
    </citation>
    <scope>NUCLEOTIDE SEQUENCE [GENOMIC DNA]</scope>
    <source>
        <strain>ATCC 204508 / S288c</strain>
    </source>
</reference>
<reference key="5">
    <citation type="submission" date="1996-05" db="EMBL/GenBank/DDBJ databases">
        <authorList>
            <person name="Watson M.D."/>
        </authorList>
    </citation>
    <scope>NUCLEOTIDE SEQUENCE [GENOMIC DNA] OF 1-13</scope>
</reference>
<evidence type="ECO:0000255" key="1"/>
<evidence type="ECO:0000305" key="2"/>
<evidence type="ECO:0000305" key="3">
    <source>
    </source>
</evidence>
<feature type="chain" id="PRO_0000202874" description="Putative uncharacterized protein YGR293C">
    <location>
        <begin position="1"/>
        <end position="153"/>
    </location>
</feature>
<feature type="transmembrane region" description="Helical" evidence="1">
    <location>
        <begin position="1"/>
        <end position="21"/>
    </location>
</feature>
<feature type="transmembrane region" description="Helical" evidence="1">
    <location>
        <begin position="106"/>
        <end position="126"/>
    </location>
</feature>
<gene>
    <name type="ordered locus">YGR293C</name>
</gene>
<protein>
    <recommendedName>
        <fullName>Putative uncharacterized protein YGR293C</fullName>
    </recommendedName>
</protein>
<dbReference type="EMBL" id="Z73078">
    <property type="protein sequence ID" value="CAA97326.1"/>
    <property type="molecule type" value="Genomic_DNA"/>
</dbReference>
<dbReference type="EMBL" id="AY693334">
    <property type="protein sequence ID" value="AAT93353.1"/>
    <property type="molecule type" value="Genomic_DNA"/>
</dbReference>
<dbReference type="PIR" id="S64628">
    <property type="entry name" value="S64628"/>
</dbReference>
<dbReference type="DIP" id="DIP-5382N"/>
<dbReference type="PaxDb" id="4932-YGR293C"/>
<dbReference type="EnsemblFungi" id="YGR293C_mRNA">
    <property type="protein sequence ID" value="YGR293C"/>
    <property type="gene ID" value="YGR293C"/>
</dbReference>
<dbReference type="AGR" id="SGD:S000003525"/>
<dbReference type="SGD" id="S000003525">
    <property type="gene designation" value="YGR293C"/>
</dbReference>
<dbReference type="GeneTree" id="ENSGT00940000180855"/>
<dbReference type="HOGENOM" id="CLU_1714739_0_0_1"/>
<dbReference type="ChiTaRS" id="YGR293C">
    <property type="organism name" value="yeast"/>
</dbReference>
<dbReference type="GO" id="GO:0016020">
    <property type="term" value="C:membrane"/>
    <property type="evidence" value="ECO:0007669"/>
    <property type="project" value="UniProtKB-SubCell"/>
</dbReference>
<comment type="subcellular location">
    <subcellularLocation>
        <location evidence="2">Membrane</location>
        <topology evidence="2">Multi-pass membrane protein</topology>
    </subcellularLocation>
</comment>
<comment type="miscellaneous">
    <text evidence="2">Partially overlaps YGR294W.</text>
</comment>
<comment type="caution">
    <text evidence="3">Product of a dubious gene prediction unlikely to encode a functional protein. Because of that it is not part of the S.cerevisiae S288c complete/reference proteome set.</text>
</comment>
<accession>P53342</accession>